<keyword id="KW-0002">3D-structure</keyword>
<keyword id="KW-0210">Decarboxylase</keyword>
<keyword id="KW-0456">Lyase</keyword>
<keyword id="KW-0665">Pyrimidine biosynthesis</keyword>
<keyword id="KW-1185">Reference proteome</keyword>
<name>PYRF_BACSU</name>
<sequence length="239" mass="25992">MKNNLPIIALDFASAEETLAFLAPFQQEPLFVKVGMELFYQEGPSIVKQLKERNCELFLDLKLHDIPTTVNKAMKRLASLGVDLVNVHAAGGKKMMQAALEGLEEGTPAGKKRPSLIAVTQLTSTSEQIMKDELLIEKSLIDTVVHYSKQAEESGLDGVVCSVHEAKAIYQAVSPSFLTVTPGIRMSEDAANDQVRVATPAIAREKGSSAIVVGRSITKAEDPVKAYKAVRLEWEGIKS</sequence>
<proteinExistence type="evidence at protein level"/>
<dbReference type="EC" id="4.1.1.23"/>
<dbReference type="EMBL" id="M59757">
    <property type="protein sequence ID" value="AAA21273.1"/>
    <property type="molecule type" value="Genomic_DNA"/>
</dbReference>
<dbReference type="EMBL" id="AL009126">
    <property type="protein sequence ID" value="CAB13429.1"/>
    <property type="molecule type" value="Genomic_DNA"/>
</dbReference>
<dbReference type="PIR" id="I39845">
    <property type="entry name" value="I39845"/>
</dbReference>
<dbReference type="RefSeq" id="NP_389438.1">
    <property type="nucleotide sequence ID" value="NC_000964.3"/>
</dbReference>
<dbReference type="RefSeq" id="WP_003232107.1">
    <property type="nucleotide sequence ID" value="NZ_OZ025638.1"/>
</dbReference>
<dbReference type="PDB" id="1DBT">
    <property type="method" value="X-ray"/>
    <property type="resolution" value="2.40 A"/>
    <property type="chains" value="A/B/C=1-239"/>
</dbReference>
<dbReference type="PDBsum" id="1DBT"/>
<dbReference type="SMR" id="P25971"/>
<dbReference type="FunCoup" id="P25971">
    <property type="interactions" value="286"/>
</dbReference>
<dbReference type="IntAct" id="P25971">
    <property type="interactions" value="1"/>
</dbReference>
<dbReference type="MINT" id="P25971"/>
<dbReference type="STRING" id="224308.BSU15550"/>
<dbReference type="DrugBank" id="DB03685">
    <property type="generic name" value="Uridine monophosphate"/>
</dbReference>
<dbReference type="PaxDb" id="224308-BSU15550"/>
<dbReference type="EnsemblBacteria" id="CAB13429">
    <property type="protein sequence ID" value="CAB13429"/>
    <property type="gene ID" value="BSU_15550"/>
</dbReference>
<dbReference type="GeneID" id="935960"/>
<dbReference type="KEGG" id="bsu:BSU15550"/>
<dbReference type="PATRIC" id="fig|224308.179.peg.1694"/>
<dbReference type="eggNOG" id="COG0284">
    <property type="taxonomic scope" value="Bacteria"/>
</dbReference>
<dbReference type="InParanoid" id="P25971"/>
<dbReference type="OrthoDB" id="9806203at2"/>
<dbReference type="PhylomeDB" id="P25971"/>
<dbReference type="BioCyc" id="BSUB:BSU15550-MONOMER"/>
<dbReference type="BioCyc" id="MetaCyc:BSU15550-MONOMER"/>
<dbReference type="BRENDA" id="4.1.1.23">
    <property type="organism ID" value="658"/>
</dbReference>
<dbReference type="UniPathway" id="UPA00070">
    <property type="reaction ID" value="UER00120"/>
</dbReference>
<dbReference type="EvolutionaryTrace" id="P25971"/>
<dbReference type="Proteomes" id="UP000001570">
    <property type="component" value="Chromosome"/>
</dbReference>
<dbReference type="GO" id="GO:0005829">
    <property type="term" value="C:cytosol"/>
    <property type="evidence" value="ECO:0000318"/>
    <property type="project" value="GO_Central"/>
</dbReference>
<dbReference type="GO" id="GO:0004590">
    <property type="term" value="F:orotidine-5'-phosphate decarboxylase activity"/>
    <property type="evidence" value="ECO:0000318"/>
    <property type="project" value="GO_Central"/>
</dbReference>
<dbReference type="GO" id="GO:0006207">
    <property type="term" value="P:'de novo' pyrimidine nucleobase biosynthetic process"/>
    <property type="evidence" value="ECO:0000318"/>
    <property type="project" value="GO_Central"/>
</dbReference>
<dbReference type="GO" id="GO:0044205">
    <property type="term" value="P:'de novo' UMP biosynthetic process"/>
    <property type="evidence" value="ECO:0007669"/>
    <property type="project" value="UniProtKB-UniRule"/>
</dbReference>
<dbReference type="CDD" id="cd04725">
    <property type="entry name" value="OMP_decarboxylase_like"/>
    <property type="match status" value="1"/>
</dbReference>
<dbReference type="FunFam" id="3.20.20.70:FF:000015">
    <property type="entry name" value="Orotidine 5'-phosphate decarboxylase"/>
    <property type="match status" value="1"/>
</dbReference>
<dbReference type="Gene3D" id="3.20.20.70">
    <property type="entry name" value="Aldolase class I"/>
    <property type="match status" value="1"/>
</dbReference>
<dbReference type="HAMAP" id="MF_01200_B">
    <property type="entry name" value="OMPdecase_type1_B"/>
    <property type="match status" value="1"/>
</dbReference>
<dbReference type="InterPro" id="IPR013785">
    <property type="entry name" value="Aldolase_TIM"/>
</dbReference>
<dbReference type="InterPro" id="IPR014732">
    <property type="entry name" value="OMPdecase"/>
</dbReference>
<dbReference type="InterPro" id="IPR018089">
    <property type="entry name" value="OMPdecase_AS"/>
</dbReference>
<dbReference type="InterPro" id="IPR047596">
    <property type="entry name" value="OMPdecase_bac"/>
</dbReference>
<dbReference type="InterPro" id="IPR001754">
    <property type="entry name" value="OMPdeCOase_dom"/>
</dbReference>
<dbReference type="InterPro" id="IPR011060">
    <property type="entry name" value="RibuloseP-bd_barrel"/>
</dbReference>
<dbReference type="NCBIfam" id="NF001273">
    <property type="entry name" value="PRK00230.1"/>
    <property type="match status" value="1"/>
</dbReference>
<dbReference type="NCBIfam" id="TIGR01740">
    <property type="entry name" value="pyrF"/>
    <property type="match status" value="1"/>
</dbReference>
<dbReference type="PANTHER" id="PTHR32119">
    <property type="entry name" value="OROTIDINE 5'-PHOSPHATE DECARBOXYLASE"/>
    <property type="match status" value="1"/>
</dbReference>
<dbReference type="PANTHER" id="PTHR32119:SF2">
    <property type="entry name" value="OROTIDINE 5'-PHOSPHATE DECARBOXYLASE"/>
    <property type="match status" value="1"/>
</dbReference>
<dbReference type="Pfam" id="PF00215">
    <property type="entry name" value="OMPdecase"/>
    <property type="match status" value="1"/>
</dbReference>
<dbReference type="SMART" id="SM00934">
    <property type="entry name" value="OMPdecase"/>
    <property type="match status" value="1"/>
</dbReference>
<dbReference type="SUPFAM" id="SSF51366">
    <property type="entry name" value="Ribulose-phoshate binding barrel"/>
    <property type="match status" value="1"/>
</dbReference>
<dbReference type="PROSITE" id="PS00156">
    <property type="entry name" value="OMPDECASE"/>
    <property type="match status" value="1"/>
</dbReference>
<comment type="function">
    <text>Catalyzes the decarboxylation of orotidine 5'-monophosphate (OMP) to uridine 5'-monophosphate (UMP).</text>
</comment>
<comment type="catalytic activity">
    <reaction>
        <text>orotidine 5'-phosphate + H(+) = UMP + CO2</text>
        <dbReference type="Rhea" id="RHEA:11596"/>
        <dbReference type="ChEBI" id="CHEBI:15378"/>
        <dbReference type="ChEBI" id="CHEBI:16526"/>
        <dbReference type="ChEBI" id="CHEBI:57538"/>
        <dbReference type="ChEBI" id="CHEBI:57865"/>
        <dbReference type="EC" id="4.1.1.23"/>
    </reaction>
</comment>
<comment type="pathway">
    <text>Pyrimidine metabolism; UMP biosynthesis via de novo pathway; UMP from orotate: step 2/2.</text>
</comment>
<comment type="subunit">
    <text evidence="1">Homodimer.</text>
</comment>
<comment type="similarity">
    <text evidence="2">Belongs to the OMP decarboxylase family. Type 1 subfamily.</text>
</comment>
<reference key="1">
    <citation type="journal article" date="1991" name="J. Biol. Chem.">
        <title>Functional organization and nucleotide sequence of the Bacillus subtilis pyrimidine biosynthetic operon.</title>
        <authorList>
            <person name="Quinn C.L."/>
            <person name="Stephenson B.T."/>
            <person name="Switzer R.L."/>
        </authorList>
    </citation>
    <scope>NUCLEOTIDE SEQUENCE [GENOMIC DNA]</scope>
</reference>
<reference key="2">
    <citation type="journal article" date="1997" name="Nature">
        <title>The complete genome sequence of the Gram-positive bacterium Bacillus subtilis.</title>
        <authorList>
            <person name="Kunst F."/>
            <person name="Ogasawara N."/>
            <person name="Moszer I."/>
            <person name="Albertini A.M."/>
            <person name="Alloni G."/>
            <person name="Azevedo V."/>
            <person name="Bertero M.G."/>
            <person name="Bessieres P."/>
            <person name="Bolotin A."/>
            <person name="Borchert S."/>
            <person name="Borriss R."/>
            <person name="Boursier L."/>
            <person name="Brans A."/>
            <person name="Braun M."/>
            <person name="Brignell S.C."/>
            <person name="Bron S."/>
            <person name="Brouillet S."/>
            <person name="Bruschi C.V."/>
            <person name="Caldwell B."/>
            <person name="Capuano V."/>
            <person name="Carter N.M."/>
            <person name="Choi S.-K."/>
            <person name="Codani J.-J."/>
            <person name="Connerton I.F."/>
            <person name="Cummings N.J."/>
            <person name="Daniel R.A."/>
            <person name="Denizot F."/>
            <person name="Devine K.M."/>
            <person name="Duesterhoeft A."/>
            <person name="Ehrlich S.D."/>
            <person name="Emmerson P.T."/>
            <person name="Entian K.-D."/>
            <person name="Errington J."/>
            <person name="Fabret C."/>
            <person name="Ferrari E."/>
            <person name="Foulger D."/>
            <person name="Fritz C."/>
            <person name="Fujita M."/>
            <person name="Fujita Y."/>
            <person name="Fuma S."/>
            <person name="Galizzi A."/>
            <person name="Galleron N."/>
            <person name="Ghim S.-Y."/>
            <person name="Glaser P."/>
            <person name="Goffeau A."/>
            <person name="Golightly E.J."/>
            <person name="Grandi G."/>
            <person name="Guiseppi G."/>
            <person name="Guy B.J."/>
            <person name="Haga K."/>
            <person name="Haiech J."/>
            <person name="Harwood C.R."/>
            <person name="Henaut A."/>
            <person name="Hilbert H."/>
            <person name="Holsappel S."/>
            <person name="Hosono S."/>
            <person name="Hullo M.-F."/>
            <person name="Itaya M."/>
            <person name="Jones L.-M."/>
            <person name="Joris B."/>
            <person name="Karamata D."/>
            <person name="Kasahara Y."/>
            <person name="Klaerr-Blanchard M."/>
            <person name="Klein C."/>
            <person name="Kobayashi Y."/>
            <person name="Koetter P."/>
            <person name="Koningstein G."/>
            <person name="Krogh S."/>
            <person name="Kumano M."/>
            <person name="Kurita K."/>
            <person name="Lapidus A."/>
            <person name="Lardinois S."/>
            <person name="Lauber J."/>
            <person name="Lazarevic V."/>
            <person name="Lee S.-M."/>
            <person name="Levine A."/>
            <person name="Liu H."/>
            <person name="Masuda S."/>
            <person name="Mauel C."/>
            <person name="Medigue C."/>
            <person name="Medina N."/>
            <person name="Mellado R.P."/>
            <person name="Mizuno M."/>
            <person name="Moestl D."/>
            <person name="Nakai S."/>
            <person name="Noback M."/>
            <person name="Noone D."/>
            <person name="O'Reilly M."/>
            <person name="Ogawa K."/>
            <person name="Ogiwara A."/>
            <person name="Oudega B."/>
            <person name="Park S.-H."/>
            <person name="Parro V."/>
            <person name="Pohl T.M."/>
            <person name="Portetelle D."/>
            <person name="Porwollik S."/>
            <person name="Prescott A.M."/>
            <person name="Presecan E."/>
            <person name="Pujic P."/>
            <person name="Purnelle B."/>
            <person name="Rapoport G."/>
            <person name="Rey M."/>
            <person name="Reynolds S."/>
            <person name="Rieger M."/>
            <person name="Rivolta C."/>
            <person name="Rocha E."/>
            <person name="Roche B."/>
            <person name="Rose M."/>
            <person name="Sadaie Y."/>
            <person name="Sato T."/>
            <person name="Scanlan E."/>
            <person name="Schleich S."/>
            <person name="Schroeter R."/>
            <person name="Scoffone F."/>
            <person name="Sekiguchi J."/>
            <person name="Sekowska A."/>
            <person name="Seror S.J."/>
            <person name="Serror P."/>
            <person name="Shin B.-S."/>
            <person name="Soldo B."/>
            <person name="Sorokin A."/>
            <person name="Tacconi E."/>
            <person name="Takagi T."/>
            <person name="Takahashi H."/>
            <person name="Takemaru K."/>
            <person name="Takeuchi M."/>
            <person name="Tamakoshi A."/>
            <person name="Tanaka T."/>
            <person name="Terpstra P."/>
            <person name="Tognoni A."/>
            <person name="Tosato V."/>
            <person name="Uchiyama S."/>
            <person name="Vandenbol M."/>
            <person name="Vannier F."/>
            <person name="Vassarotti A."/>
            <person name="Viari A."/>
            <person name="Wambutt R."/>
            <person name="Wedler E."/>
            <person name="Wedler H."/>
            <person name="Weitzenegger T."/>
            <person name="Winters P."/>
            <person name="Wipat A."/>
            <person name="Yamamoto H."/>
            <person name="Yamane K."/>
            <person name="Yasumoto K."/>
            <person name="Yata K."/>
            <person name="Yoshida K."/>
            <person name="Yoshikawa H.-F."/>
            <person name="Zumstein E."/>
            <person name="Yoshikawa H."/>
            <person name="Danchin A."/>
        </authorList>
    </citation>
    <scope>NUCLEOTIDE SEQUENCE [LARGE SCALE GENOMIC DNA]</scope>
    <source>
        <strain>168</strain>
    </source>
</reference>
<reference key="3">
    <citation type="journal article" date="2000" name="Proc. Natl. Acad. Sci. U.S.A.">
        <title>The crystal structure and mechanism of orotidine 5'-monophosphate decarboxylase.</title>
        <authorList>
            <person name="Appleby T.C."/>
            <person name="Kinsland C."/>
            <person name="Begley T.P."/>
            <person name="Ealick S.E."/>
        </authorList>
    </citation>
    <scope>X-RAY CRYSTALLOGRAPHY (2.4 ANGSTROMS) IN COMPLEX WITH UMP</scope>
    <scope>SUBUNIT</scope>
</reference>
<gene>
    <name type="primary">pyrF</name>
    <name type="ordered locus">BSU15550</name>
</gene>
<protein>
    <recommendedName>
        <fullName>Orotidine 5'-phosphate decarboxylase</fullName>
        <ecNumber>4.1.1.23</ecNumber>
    </recommendedName>
    <alternativeName>
        <fullName>OMP decarboxylase</fullName>
        <shortName>OMPDCase</shortName>
        <shortName>OMPdecase</shortName>
    </alternativeName>
</protein>
<feature type="chain" id="PRO_0000134527" description="Orotidine 5'-phosphate decarboxylase">
    <location>
        <begin position="1"/>
        <end position="239"/>
    </location>
</feature>
<feature type="active site" description="Proton donor">
    <location>
        <position position="62"/>
    </location>
</feature>
<feature type="binding site">
    <location>
        <position position="11"/>
    </location>
    <ligand>
        <name>substrate</name>
    </ligand>
</feature>
<feature type="binding site">
    <location>
        <position position="33"/>
    </location>
    <ligand>
        <name>substrate</name>
    </ligand>
</feature>
<feature type="binding site">
    <location>
        <begin position="60"/>
        <end position="69"/>
    </location>
    <ligand>
        <name>substrate</name>
    </ligand>
</feature>
<feature type="binding site">
    <location>
        <position position="123"/>
    </location>
    <ligand>
        <name>substrate</name>
    </ligand>
</feature>
<feature type="binding site">
    <location>
        <position position="185"/>
    </location>
    <ligand>
        <name>substrate</name>
    </ligand>
</feature>
<feature type="binding site">
    <location>
        <position position="194"/>
    </location>
    <ligand>
        <name>substrate</name>
    </ligand>
</feature>
<feature type="binding site">
    <location>
        <position position="214"/>
    </location>
    <ligand>
        <name>substrate</name>
    </ligand>
</feature>
<feature type="binding site">
    <location>
        <position position="215"/>
    </location>
    <ligand>
        <name>substrate</name>
    </ligand>
</feature>
<feature type="strand" evidence="3">
    <location>
        <begin position="7"/>
        <end position="9"/>
    </location>
</feature>
<feature type="helix" evidence="3">
    <location>
        <begin position="15"/>
        <end position="21"/>
    </location>
</feature>
<feature type="helix" evidence="3">
    <location>
        <begin position="23"/>
        <end position="25"/>
    </location>
</feature>
<feature type="strand" evidence="3">
    <location>
        <begin position="31"/>
        <end position="34"/>
    </location>
</feature>
<feature type="helix" evidence="3">
    <location>
        <begin position="36"/>
        <end position="42"/>
    </location>
</feature>
<feature type="helix" evidence="3">
    <location>
        <begin position="44"/>
        <end position="52"/>
    </location>
</feature>
<feature type="strand" evidence="3">
    <location>
        <begin position="56"/>
        <end position="63"/>
    </location>
</feature>
<feature type="helix" evidence="3">
    <location>
        <begin position="67"/>
        <end position="78"/>
    </location>
</feature>
<feature type="turn" evidence="3">
    <location>
        <begin position="79"/>
        <end position="81"/>
    </location>
</feature>
<feature type="strand" evidence="3">
    <location>
        <begin position="83"/>
        <end position="88"/>
    </location>
</feature>
<feature type="helix" evidence="3">
    <location>
        <begin position="89"/>
        <end position="91"/>
    </location>
</feature>
<feature type="helix" evidence="3">
    <location>
        <begin position="93"/>
        <end position="106"/>
    </location>
</feature>
<feature type="strand" evidence="3">
    <location>
        <begin position="115"/>
        <end position="119"/>
    </location>
</feature>
<feature type="helix" evidence="3">
    <location>
        <begin position="127"/>
        <end position="132"/>
    </location>
</feature>
<feature type="helix" evidence="3">
    <location>
        <begin position="140"/>
        <end position="153"/>
    </location>
</feature>
<feature type="strand" evidence="3">
    <location>
        <begin position="157"/>
        <end position="160"/>
    </location>
</feature>
<feature type="helix" evidence="3">
    <location>
        <begin position="163"/>
        <end position="165"/>
    </location>
</feature>
<feature type="helix" evidence="3">
    <location>
        <begin position="166"/>
        <end position="169"/>
    </location>
</feature>
<feature type="turn" evidence="3">
    <location>
        <begin position="170"/>
        <end position="172"/>
    </location>
</feature>
<feature type="strand" evidence="3">
    <location>
        <begin position="178"/>
        <end position="181"/>
    </location>
</feature>
<feature type="helix" evidence="3">
    <location>
        <begin position="200"/>
        <end position="205"/>
    </location>
</feature>
<feature type="strand" evidence="3">
    <location>
        <begin position="209"/>
        <end position="213"/>
    </location>
</feature>
<feature type="helix" evidence="3">
    <location>
        <begin position="215"/>
        <end position="218"/>
    </location>
</feature>
<feature type="helix" evidence="3">
    <location>
        <begin position="223"/>
        <end position="235"/>
    </location>
</feature>
<organism>
    <name type="scientific">Bacillus subtilis (strain 168)</name>
    <dbReference type="NCBI Taxonomy" id="224308"/>
    <lineage>
        <taxon>Bacteria</taxon>
        <taxon>Bacillati</taxon>
        <taxon>Bacillota</taxon>
        <taxon>Bacilli</taxon>
        <taxon>Bacillales</taxon>
        <taxon>Bacillaceae</taxon>
        <taxon>Bacillus</taxon>
    </lineage>
</organism>
<evidence type="ECO:0000269" key="1">
    <source>
    </source>
</evidence>
<evidence type="ECO:0000305" key="2"/>
<evidence type="ECO:0007829" key="3">
    <source>
        <dbReference type="PDB" id="1DBT"/>
    </source>
</evidence>
<accession>P25971</accession>